<dbReference type="EC" id="2.7.7.8" evidence="1"/>
<dbReference type="EMBL" id="CP000507">
    <property type="protein sequence ID" value="ABL99173.1"/>
    <property type="molecule type" value="Genomic_DNA"/>
</dbReference>
<dbReference type="RefSeq" id="WP_011759082.1">
    <property type="nucleotide sequence ID" value="NC_008700.1"/>
</dbReference>
<dbReference type="SMR" id="A1S467"/>
<dbReference type="STRING" id="326297.Sama_0966"/>
<dbReference type="KEGG" id="saz:Sama_0966"/>
<dbReference type="eggNOG" id="COG1185">
    <property type="taxonomic scope" value="Bacteria"/>
</dbReference>
<dbReference type="HOGENOM" id="CLU_004217_2_2_6"/>
<dbReference type="OrthoDB" id="9804305at2"/>
<dbReference type="Proteomes" id="UP000009175">
    <property type="component" value="Chromosome"/>
</dbReference>
<dbReference type="GO" id="GO:0005829">
    <property type="term" value="C:cytosol"/>
    <property type="evidence" value="ECO:0007669"/>
    <property type="project" value="TreeGrafter"/>
</dbReference>
<dbReference type="GO" id="GO:0000175">
    <property type="term" value="F:3'-5'-RNA exonuclease activity"/>
    <property type="evidence" value="ECO:0007669"/>
    <property type="project" value="TreeGrafter"/>
</dbReference>
<dbReference type="GO" id="GO:0000287">
    <property type="term" value="F:magnesium ion binding"/>
    <property type="evidence" value="ECO:0007669"/>
    <property type="project" value="UniProtKB-UniRule"/>
</dbReference>
<dbReference type="GO" id="GO:0004654">
    <property type="term" value="F:polyribonucleotide nucleotidyltransferase activity"/>
    <property type="evidence" value="ECO:0007669"/>
    <property type="project" value="UniProtKB-UniRule"/>
</dbReference>
<dbReference type="GO" id="GO:0003723">
    <property type="term" value="F:RNA binding"/>
    <property type="evidence" value="ECO:0007669"/>
    <property type="project" value="UniProtKB-UniRule"/>
</dbReference>
<dbReference type="GO" id="GO:0006402">
    <property type="term" value="P:mRNA catabolic process"/>
    <property type="evidence" value="ECO:0007669"/>
    <property type="project" value="UniProtKB-UniRule"/>
</dbReference>
<dbReference type="GO" id="GO:0006396">
    <property type="term" value="P:RNA processing"/>
    <property type="evidence" value="ECO:0007669"/>
    <property type="project" value="InterPro"/>
</dbReference>
<dbReference type="CDD" id="cd02393">
    <property type="entry name" value="KH-I_PNPase"/>
    <property type="match status" value="1"/>
</dbReference>
<dbReference type="CDD" id="cd11363">
    <property type="entry name" value="RNase_PH_PNPase_1"/>
    <property type="match status" value="1"/>
</dbReference>
<dbReference type="CDD" id="cd11364">
    <property type="entry name" value="RNase_PH_PNPase_2"/>
    <property type="match status" value="1"/>
</dbReference>
<dbReference type="CDD" id="cd04472">
    <property type="entry name" value="S1_PNPase"/>
    <property type="match status" value="1"/>
</dbReference>
<dbReference type="FunFam" id="2.40.50.140:FF:000023">
    <property type="entry name" value="Polyribonucleotide nucleotidyltransferase"/>
    <property type="match status" value="1"/>
</dbReference>
<dbReference type="FunFam" id="3.30.1370.10:FF:000001">
    <property type="entry name" value="Polyribonucleotide nucleotidyltransferase"/>
    <property type="match status" value="1"/>
</dbReference>
<dbReference type="FunFam" id="3.30.230.70:FF:000001">
    <property type="entry name" value="Polyribonucleotide nucleotidyltransferase"/>
    <property type="match status" value="1"/>
</dbReference>
<dbReference type="FunFam" id="3.30.230.70:FF:000002">
    <property type="entry name" value="Polyribonucleotide nucleotidyltransferase"/>
    <property type="match status" value="1"/>
</dbReference>
<dbReference type="Gene3D" id="3.30.230.70">
    <property type="entry name" value="GHMP Kinase, N-terminal domain"/>
    <property type="match status" value="2"/>
</dbReference>
<dbReference type="Gene3D" id="3.30.1370.10">
    <property type="entry name" value="K Homology domain, type 1"/>
    <property type="match status" value="1"/>
</dbReference>
<dbReference type="Gene3D" id="2.40.50.140">
    <property type="entry name" value="Nucleic acid-binding proteins"/>
    <property type="match status" value="1"/>
</dbReference>
<dbReference type="HAMAP" id="MF_01595">
    <property type="entry name" value="PNPase"/>
    <property type="match status" value="1"/>
</dbReference>
<dbReference type="InterPro" id="IPR001247">
    <property type="entry name" value="ExoRNase_PH_dom1"/>
</dbReference>
<dbReference type="InterPro" id="IPR015847">
    <property type="entry name" value="ExoRNase_PH_dom2"/>
</dbReference>
<dbReference type="InterPro" id="IPR036345">
    <property type="entry name" value="ExoRNase_PH_dom2_sf"/>
</dbReference>
<dbReference type="InterPro" id="IPR004087">
    <property type="entry name" value="KH_dom"/>
</dbReference>
<dbReference type="InterPro" id="IPR004088">
    <property type="entry name" value="KH_dom_type_1"/>
</dbReference>
<dbReference type="InterPro" id="IPR036612">
    <property type="entry name" value="KH_dom_type_1_sf"/>
</dbReference>
<dbReference type="InterPro" id="IPR012340">
    <property type="entry name" value="NA-bd_OB-fold"/>
</dbReference>
<dbReference type="InterPro" id="IPR012162">
    <property type="entry name" value="PNPase"/>
</dbReference>
<dbReference type="InterPro" id="IPR027408">
    <property type="entry name" value="PNPase/RNase_PH_dom_sf"/>
</dbReference>
<dbReference type="InterPro" id="IPR015848">
    <property type="entry name" value="PNPase_PH_RNA-bd_bac/org-type"/>
</dbReference>
<dbReference type="InterPro" id="IPR036456">
    <property type="entry name" value="PNPase_PH_RNA-bd_sf"/>
</dbReference>
<dbReference type="InterPro" id="IPR020568">
    <property type="entry name" value="Ribosomal_Su5_D2-typ_SF"/>
</dbReference>
<dbReference type="InterPro" id="IPR003029">
    <property type="entry name" value="S1_domain"/>
</dbReference>
<dbReference type="NCBIfam" id="TIGR03591">
    <property type="entry name" value="polynuc_phos"/>
    <property type="match status" value="1"/>
</dbReference>
<dbReference type="NCBIfam" id="NF008805">
    <property type="entry name" value="PRK11824.1"/>
    <property type="match status" value="1"/>
</dbReference>
<dbReference type="PANTHER" id="PTHR11252">
    <property type="entry name" value="POLYRIBONUCLEOTIDE NUCLEOTIDYLTRANSFERASE"/>
    <property type="match status" value="1"/>
</dbReference>
<dbReference type="PANTHER" id="PTHR11252:SF0">
    <property type="entry name" value="POLYRIBONUCLEOTIDE NUCLEOTIDYLTRANSFERASE 1, MITOCHONDRIAL"/>
    <property type="match status" value="1"/>
</dbReference>
<dbReference type="Pfam" id="PF00013">
    <property type="entry name" value="KH_1"/>
    <property type="match status" value="1"/>
</dbReference>
<dbReference type="Pfam" id="PF03726">
    <property type="entry name" value="PNPase"/>
    <property type="match status" value="1"/>
</dbReference>
<dbReference type="Pfam" id="PF01138">
    <property type="entry name" value="RNase_PH"/>
    <property type="match status" value="2"/>
</dbReference>
<dbReference type="Pfam" id="PF03725">
    <property type="entry name" value="RNase_PH_C"/>
    <property type="match status" value="2"/>
</dbReference>
<dbReference type="Pfam" id="PF00575">
    <property type="entry name" value="S1"/>
    <property type="match status" value="1"/>
</dbReference>
<dbReference type="PIRSF" id="PIRSF005499">
    <property type="entry name" value="PNPase"/>
    <property type="match status" value="1"/>
</dbReference>
<dbReference type="SMART" id="SM00322">
    <property type="entry name" value="KH"/>
    <property type="match status" value="1"/>
</dbReference>
<dbReference type="SMART" id="SM00316">
    <property type="entry name" value="S1"/>
    <property type="match status" value="1"/>
</dbReference>
<dbReference type="SUPFAM" id="SSF54791">
    <property type="entry name" value="Eukaryotic type KH-domain (KH-domain type I)"/>
    <property type="match status" value="1"/>
</dbReference>
<dbReference type="SUPFAM" id="SSF50249">
    <property type="entry name" value="Nucleic acid-binding proteins"/>
    <property type="match status" value="1"/>
</dbReference>
<dbReference type="SUPFAM" id="SSF46915">
    <property type="entry name" value="Polynucleotide phosphorylase/guanosine pentaphosphate synthase (PNPase/GPSI), domain 3"/>
    <property type="match status" value="1"/>
</dbReference>
<dbReference type="SUPFAM" id="SSF55666">
    <property type="entry name" value="Ribonuclease PH domain 2-like"/>
    <property type="match status" value="2"/>
</dbReference>
<dbReference type="SUPFAM" id="SSF54211">
    <property type="entry name" value="Ribosomal protein S5 domain 2-like"/>
    <property type="match status" value="2"/>
</dbReference>
<dbReference type="PROSITE" id="PS50084">
    <property type="entry name" value="KH_TYPE_1"/>
    <property type="match status" value="1"/>
</dbReference>
<dbReference type="PROSITE" id="PS50126">
    <property type="entry name" value="S1"/>
    <property type="match status" value="1"/>
</dbReference>
<sequence length="699" mass="75371">MNPIVKSFEYGQHTVTLETGVIARQADGAVMASMGDTTVLVTVVGKKEADPGRDFFPLTVNYQEKTYAAGKIPGGFFKREGRPSEDETLIARLIDRPIRPLFPDDFTNEVQVIITVVSVDPQIEPDIVSMIGTSAALAISGIPFNGPLGAARVGYVNGEYVLNPGAAELAGSELDLVVAGTQSAVLMVESEAKSLPEEVMLGAVVYGHDQQQVVINAINEFAAEAGKPRWNWTAPVKNEALVAQIKELAEEGLTAAYQIMAKQERYEAVGEVKKATIAKLQEANPDVNVREAADLLGSLEKNVVRGRIIAGMPRIDGREPDMIRALSVMAGVLPRTHGSALFTRGETQALVTCTLGTERDAQKIDSIMGERTNRFMLHYNFPPYSVGETGMVGSPKRREIGHGKLAWRGINAVMPSAEEFPYSVRVVSEITESNGSSSMASVCGTSLALMDAGVPIKTSVAGIAMGLVKEGDNFVVLSDILGDEDHLGDMDFKVAGTRDGVTALQMDIKIEGITKEIMEIALQQAYGARVHILNVMDQAIGSARPDISDFAPRITTIKINPEKIRDVIGKGGAVIRALTEETGTTIELEDDGTVKIASNNGDATREAIRRIEEITSEVEVGRLYTGKVIRIVDFGAFVNILPGKDGLVHISQISDERVANVSDHLQLNQEVTVKVMEVDRQGRVRLSIKEAQVKEPAAE</sequence>
<evidence type="ECO:0000255" key="1">
    <source>
        <dbReference type="HAMAP-Rule" id="MF_01595"/>
    </source>
</evidence>
<feature type="chain" id="PRO_0000329836" description="Polyribonucleotide nucleotidyltransferase">
    <location>
        <begin position="1"/>
        <end position="699"/>
    </location>
</feature>
<feature type="domain" description="KH" evidence="1">
    <location>
        <begin position="552"/>
        <end position="611"/>
    </location>
</feature>
<feature type="domain" description="S1 motif" evidence="1">
    <location>
        <begin position="621"/>
        <end position="689"/>
    </location>
</feature>
<feature type="binding site" evidence="1">
    <location>
        <position position="485"/>
    </location>
    <ligand>
        <name>Mg(2+)</name>
        <dbReference type="ChEBI" id="CHEBI:18420"/>
    </ligand>
</feature>
<feature type="binding site" evidence="1">
    <location>
        <position position="491"/>
    </location>
    <ligand>
        <name>Mg(2+)</name>
        <dbReference type="ChEBI" id="CHEBI:18420"/>
    </ligand>
</feature>
<protein>
    <recommendedName>
        <fullName evidence="1">Polyribonucleotide nucleotidyltransferase</fullName>
        <ecNumber evidence="1">2.7.7.8</ecNumber>
    </recommendedName>
    <alternativeName>
        <fullName evidence="1">Polynucleotide phosphorylase</fullName>
        <shortName evidence="1">PNPase</shortName>
    </alternativeName>
</protein>
<proteinExistence type="inferred from homology"/>
<name>PNP_SHEAM</name>
<gene>
    <name evidence="1" type="primary">pnp</name>
    <name type="ordered locus">Sama_0966</name>
</gene>
<accession>A1S467</accession>
<comment type="function">
    <text evidence="1">Involved in mRNA degradation. Catalyzes the phosphorolysis of single-stranded polyribonucleotides processively in the 3'- to 5'-direction.</text>
</comment>
<comment type="catalytic activity">
    <reaction evidence="1">
        <text>RNA(n+1) + phosphate = RNA(n) + a ribonucleoside 5'-diphosphate</text>
        <dbReference type="Rhea" id="RHEA:22096"/>
        <dbReference type="Rhea" id="RHEA-COMP:14527"/>
        <dbReference type="Rhea" id="RHEA-COMP:17342"/>
        <dbReference type="ChEBI" id="CHEBI:43474"/>
        <dbReference type="ChEBI" id="CHEBI:57930"/>
        <dbReference type="ChEBI" id="CHEBI:140395"/>
        <dbReference type="EC" id="2.7.7.8"/>
    </reaction>
</comment>
<comment type="cofactor">
    <cofactor evidence="1">
        <name>Mg(2+)</name>
        <dbReference type="ChEBI" id="CHEBI:18420"/>
    </cofactor>
</comment>
<comment type="subunit">
    <text evidence="1">Component of the RNA degradosome, which is a multiprotein complex involved in RNA processing and mRNA degradation.</text>
</comment>
<comment type="subcellular location">
    <subcellularLocation>
        <location evidence="1">Cytoplasm</location>
    </subcellularLocation>
</comment>
<comment type="similarity">
    <text evidence="1">Belongs to the polyribonucleotide nucleotidyltransferase family.</text>
</comment>
<keyword id="KW-0963">Cytoplasm</keyword>
<keyword id="KW-0460">Magnesium</keyword>
<keyword id="KW-0479">Metal-binding</keyword>
<keyword id="KW-0548">Nucleotidyltransferase</keyword>
<keyword id="KW-1185">Reference proteome</keyword>
<keyword id="KW-0694">RNA-binding</keyword>
<keyword id="KW-0808">Transferase</keyword>
<reference key="1">
    <citation type="submission" date="2006-12" db="EMBL/GenBank/DDBJ databases">
        <title>Complete sequence of Shewanella amazonensis SB2B.</title>
        <authorList>
            <consortium name="US DOE Joint Genome Institute"/>
            <person name="Copeland A."/>
            <person name="Lucas S."/>
            <person name="Lapidus A."/>
            <person name="Barry K."/>
            <person name="Detter J.C."/>
            <person name="Glavina del Rio T."/>
            <person name="Hammon N."/>
            <person name="Israni S."/>
            <person name="Dalin E."/>
            <person name="Tice H."/>
            <person name="Pitluck S."/>
            <person name="Munk A.C."/>
            <person name="Brettin T."/>
            <person name="Bruce D."/>
            <person name="Han C."/>
            <person name="Tapia R."/>
            <person name="Gilna P."/>
            <person name="Schmutz J."/>
            <person name="Larimer F."/>
            <person name="Land M."/>
            <person name="Hauser L."/>
            <person name="Kyrpides N."/>
            <person name="Mikhailova N."/>
            <person name="Fredrickson J."/>
            <person name="Richardson P."/>
        </authorList>
    </citation>
    <scope>NUCLEOTIDE SEQUENCE [LARGE SCALE GENOMIC DNA]</scope>
    <source>
        <strain>ATCC BAA-1098 / SB2B</strain>
    </source>
</reference>
<organism>
    <name type="scientific">Shewanella amazonensis (strain ATCC BAA-1098 / SB2B)</name>
    <dbReference type="NCBI Taxonomy" id="326297"/>
    <lineage>
        <taxon>Bacteria</taxon>
        <taxon>Pseudomonadati</taxon>
        <taxon>Pseudomonadota</taxon>
        <taxon>Gammaproteobacteria</taxon>
        <taxon>Alteromonadales</taxon>
        <taxon>Shewanellaceae</taxon>
        <taxon>Shewanella</taxon>
    </lineage>
</organism>